<feature type="chain" id="PRO_0000412787" description="Ribose 1,5-bisphosphate phosphokinase PhnN">
    <location>
        <begin position="1"/>
        <end position="453"/>
    </location>
</feature>
<feature type="region of interest" description="unknown">
    <location>
        <begin position="1"/>
        <end position="271"/>
    </location>
</feature>
<feature type="region of interest" description="Disordered" evidence="2">
    <location>
        <begin position="1"/>
        <end position="21"/>
    </location>
</feature>
<feature type="region of interest" description="Ribose 1,5-bisphosphokinase">
    <location>
        <begin position="272"/>
        <end position="453"/>
    </location>
</feature>
<name>PHNN_JANMA</name>
<protein>
    <recommendedName>
        <fullName>Ribose 1,5-bisphosphate phosphokinase PhnN</fullName>
        <ecNumber>2.7.4.23</ecNumber>
    </recommendedName>
    <alternativeName>
        <fullName>Ribose 1,5-bisphosphokinase</fullName>
    </alternativeName>
</protein>
<dbReference type="EC" id="2.7.4.23"/>
<dbReference type="EMBL" id="CP000269">
    <property type="protein sequence ID" value="ABR90087.1"/>
    <property type="molecule type" value="Genomic_DNA"/>
</dbReference>
<dbReference type="SMR" id="A6SU94"/>
<dbReference type="STRING" id="375286.mma_0151"/>
<dbReference type="KEGG" id="mms:mma_0151"/>
<dbReference type="eggNOG" id="COG3709">
    <property type="taxonomic scope" value="Bacteria"/>
</dbReference>
<dbReference type="HOGENOM" id="CLU_603790_0_0_4"/>
<dbReference type="UniPathway" id="UPA00087">
    <property type="reaction ID" value="UER00175"/>
</dbReference>
<dbReference type="Proteomes" id="UP000006388">
    <property type="component" value="Chromosome"/>
</dbReference>
<dbReference type="GO" id="GO:0005524">
    <property type="term" value="F:ATP binding"/>
    <property type="evidence" value="ECO:0007669"/>
    <property type="project" value="UniProtKB-KW"/>
</dbReference>
<dbReference type="GO" id="GO:0033863">
    <property type="term" value="F:ribose 1,5-bisphosphate phosphokinase activity"/>
    <property type="evidence" value="ECO:0007669"/>
    <property type="project" value="UniProtKB-UniRule"/>
</dbReference>
<dbReference type="GO" id="GO:0006015">
    <property type="term" value="P:5-phosphoribose 1-diphosphate biosynthetic process"/>
    <property type="evidence" value="ECO:0007669"/>
    <property type="project" value="UniProtKB-UniRule"/>
</dbReference>
<dbReference type="GO" id="GO:0019634">
    <property type="term" value="P:organic phosphonate metabolic process"/>
    <property type="evidence" value="ECO:0007669"/>
    <property type="project" value="UniProtKB-UniRule"/>
</dbReference>
<dbReference type="Gene3D" id="3.40.50.300">
    <property type="entry name" value="P-loop containing nucleotide triphosphate hydrolases"/>
    <property type="match status" value="1"/>
</dbReference>
<dbReference type="HAMAP" id="MF_00836">
    <property type="entry name" value="PhnN"/>
    <property type="match status" value="1"/>
</dbReference>
<dbReference type="InterPro" id="IPR009389">
    <property type="entry name" value="DUF1045"/>
</dbReference>
<dbReference type="InterPro" id="IPR008145">
    <property type="entry name" value="GK/Ca_channel_bsu"/>
</dbReference>
<dbReference type="InterPro" id="IPR027417">
    <property type="entry name" value="P-loop_NTPase"/>
</dbReference>
<dbReference type="InterPro" id="IPR012699">
    <property type="entry name" value="PhnN"/>
</dbReference>
<dbReference type="NCBIfam" id="TIGR02322">
    <property type="entry name" value="phosphon_PhnN"/>
    <property type="match status" value="1"/>
</dbReference>
<dbReference type="Pfam" id="PF06299">
    <property type="entry name" value="DUF1045"/>
    <property type="match status" value="1"/>
</dbReference>
<dbReference type="SMART" id="SM00072">
    <property type="entry name" value="GuKc"/>
    <property type="match status" value="1"/>
</dbReference>
<dbReference type="SUPFAM" id="SSF52540">
    <property type="entry name" value="P-loop containing nucleoside triphosphate hydrolases"/>
    <property type="match status" value="1"/>
</dbReference>
<keyword id="KW-0067">ATP-binding</keyword>
<keyword id="KW-0547">Nucleotide-binding</keyword>
<keyword id="KW-0808">Transferase</keyword>
<reference key="1">
    <citation type="journal article" date="2007" name="PLoS Genet.">
        <title>Genome analysis of Minibacterium massiliensis highlights the convergent evolution of water-living bacteria.</title>
        <authorList>
            <person name="Audic S."/>
            <person name="Robert C."/>
            <person name="Campagna B."/>
            <person name="Parinello H."/>
            <person name="Claverie J.-M."/>
            <person name="Raoult D."/>
            <person name="Drancourt M."/>
        </authorList>
    </citation>
    <scope>NUCLEOTIDE SEQUENCE [LARGE SCALE GENOMIC DNA]</scope>
    <source>
        <strain>Marseille</strain>
    </source>
</reference>
<comment type="function">
    <text evidence="1">Catalyzes the phosphorylation of ribose 1,5-bisphosphate to 5-phospho-D-ribosyl alpha-1-diphosphate (PRPP).</text>
</comment>
<comment type="catalytic activity">
    <reaction>
        <text>alpha-D-ribose 1,5-bisphosphate + ATP = 5-phospho-alpha-D-ribose 1-diphosphate + ADP</text>
        <dbReference type="Rhea" id="RHEA:20109"/>
        <dbReference type="ChEBI" id="CHEBI:30616"/>
        <dbReference type="ChEBI" id="CHEBI:58017"/>
        <dbReference type="ChEBI" id="CHEBI:68688"/>
        <dbReference type="ChEBI" id="CHEBI:456216"/>
        <dbReference type="EC" id="2.7.4.23"/>
    </reaction>
</comment>
<comment type="pathway">
    <text>Metabolic intermediate biosynthesis; 5-phospho-alpha-D-ribose 1-diphosphate biosynthesis; 5-phospho-alpha-D-ribose 1-diphosphate from D-ribose 5-phosphate (route II): step 3/3.</text>
</comment>
<comment type="similarity">
    <text evidence="3">In the C-terminal section; belongs to the ribose 1,5-bisphosphokinase family.</text>
</comment>
<evidence type="ECO:0000250" key="1"/>
<evidence type="ECO:0000256" key="2">
    <source>
        <dbReference type="SAM" id="MobiDB-lite"/>
    </source>
</evidence>
<evidence type="ECO:0000305" key="3"/>
<sequence length="453" mass="50253">MHGSTGFVQGTRPAGDQADPLPVVRVSSESMTRYALYFTPVDDSPWAQAGSSWLGRHPASPEPVQQVNIPGIPRILLSSLTADARRYGFHATLKAPFRLFEGFNEEHLLQMARAFCAAQKAIVLDEVRVRPLMDFLALQVNGPLDEIGGLAMRCVTYFDLLRAPLTEPELAKRRRAGLNARQSALLQRWGYPYTEEFYRFHMTLTDALMHADADVIFTIRKAAEQHFAAAVAAVPLAIDALTIAREEYPGAPFVEWQRIPFSGQGERASLPHSGRIFFCVGPSGVGKDSLLNWVREHSAGDEKLVFAQRTITRATQANEAHEAVDTASFWRLAAGGQFAMVWQANDLCYGIRRGIEADLKAGRDVVINGSRAYVPQLLQAFPDAIVIWIDASENLLRERLEARQREQGPALLKRLKRAKEFAPSEQAQVIRLDNSGALEAGGQKLLDILRQAK</sequence>
<proteinExistence type="inferred from homology"/>
<organism>
    <name type="scientific">Janthinobacterium sp. (strain Marseille)</name>
    <name type="common">Minibacterium massiliensis</name>
    <dbReference type="NCBI Taxonomy" id="375286"/>
    <lineage>
        <taxon>Bacteria</taxon>
        <taxon>Pseudomonadati</taxon>
        <taxon>Pseudomonadota</taxon>
        <taxon>Betaproteobacteria</taxon>
        <taxon>Burkholderiales</taxon>
        <taxon>Oxalobacteraceae</taxon>
        <taxon>Janthinobacterium</taxon>
    </lineage>
</organism>
<gene>
    <name type="primary">phnN</name>
    <name type="ordered locus">mma_0151</name>
</gene>
<accession>A6SU94</accession>